<evidence type="ECO:0000255" key="1">
    <source>
        <dbReference type="HAMAP-Rule" id="MF_00235"/>
    </source>
</evidence>
<name>KAD_KOSOT</name>
<reference key="1">
    <citation type="submission" date="2009-06" db="EMBL/GenBank/DDBJ databases">
        <title>Complete sequence of Thermotogales bacterium TBF 19.5.1.</title>
        <authorList>
            <consortium name="US DOE Joint Genome Institute"/>
            <person name="Lucas S."/>
            <person name="Copeland A."/>
            <person name="Lapidus A."/>
            <person name="Glavina del Rio T."/>
            <person name="Tice H."/>
            <person name="Bruce D."/>
            <person name="Goodwin L."/>
            <person name="Pitluck S."/>
            <person name="Chertkov O."/>
            <person name="Brettin T."/>
            <person name="Detter J.C."/>
            <person name="Han C."/>
            <person name="Schmutz J."/>
            <person name="Larimer F."/>
            <person name="Land M."/>
            <person name="Hauser L."/>
            <person name="Kyrpides N."/>
            <person name="Ovchinnikova G."/>
            <person name="Noll K."/>
        </authorList>
    </citation>
    <scope>NUCLEOTIDE SEQUENCE [LARGE SCALE GENOMIC DNA]</scope>
    <source>
        <strain>ATCC BAA-1733 / DSM 21960 / TBF 19.5.1</strain>
    </source>
</reference>
<proteinExistence type="inferred from homology"/>
<protein>
    <recommendedName>
        <fullName evidence="1">Adenylate kinase</fullName>
        <shortName evidence="1">AK</shortName>
        <ecNumber evidence="1">2.7.4.3</ecNumber>
    </recommendedName>
    <alternativeName>
        <fullName evidence="1">ATP-AMP transphosphorylase</fullName>
    </alternativeName>
    <alternativeName>
        <fullName evidence="1">ATP:AMP phosphotransferase</fullName>
    </alternativeName>
    <alternativeName>
        <fullName evidence="1">Adenylate monophosphate kinase</fullName>
    </alternativeName>
</protein>
<accession>C5CGI1</accession>
<comment type="function">
    <text evidence="1">Catalyzes the reversible transfer of the terminal phosphate group between ATP and AMP. Plays an important role in cellular energy homeostasis and in adenine nucleotide metabolism.</text>
</comment>
<comment type="catalytic activity">
    <reaction evidence="1">
        <text>AMP + ATP = 2 ADP</text>
        <dbReference type="Rhea" id="RHEA:12973"/>
        <dbReference type="ChEBI" id="CHEBI:30616"/>
        <dbReference type="ChEBI" id="CHEBI:456215"/>
        <dbReference type="ChEBI" id="CHEBI:456216"/>
        <dbReference type="EC" id="2.7.4.3"/>
    </reaction>
</comment>
<comment type="pathway">
    <text evidence="1">Purine metabolism; AMP biosynthesis via salvage pathway; AMP from ADP: step 1/1.</text>
</comment>
<comment type="subunit">
    <text evidence="1">Monomer.</text>
</comment>
<comment type="subcellular location">
    <subcellularLocation>
        <location evidence="1">Cytoplasm</location>
    </subcellularLocation>
</comment>
<comment type="domain">
    <text evidence="1">Consists of three domains, a large central CORE domain and two small peripheral domains, NMPbind and LID, which undergo movements during catalysis. The LID domain closes over the site of phosphoryl transfer upon ATP binding. Assembling and dissambling the active center during each catalytic cycle provides an effective means to prevent ATP hydrolysis. Some bacteria have evolved a zinc-coordinating structure that stabilizes the LID domain.</text>
</comment>
<comment type="similarity">
    <text evidence="1">Belongs to the adenylate kinase family.</text>
</comment>
<feature type="chain" id="PRO_1000204418" description="Adenylate kinase">
    <location>
        <begin position="1"/>
        <end position="215"/>
    </location>
</feature>
<feature type="region of interest" description="NMP" evidence="1">
    <location>
        <begin position="30"/>
        <end position="59"/>
    </location>
</feature>
<feature type="region of interest" description="LID" evidence="1">
    <location>
        <begin position="126"/>
        <end position="163"/>
    </location>
</feature>
<feature type="binding site" evidence="1">
    <location>
        <begin position="10"/>
        <end position="15"/>
    </location>
    <ligand>
        <name>ATP</name>
        <dbReference type="ChEBI" id="CHEBI:30616"/>
    </ligand>
</feature>
<feature type="binding site" evidence="1">
    <location>
        <position position="31"/>
    </location>
    <ligand>
        <name>AMP</name>
        <dbReference type="ChEBI" id="CHEBI:456215"/>
    </ligand>
</feature>
<feature type="binding site" evidence="1">
    <location>
        <position position="36"/>
    </location>
    <ligand>
        <name>AMP</name>
        <dbReference type="ChEBI" id="CHEBI:456215"/>
    </ligand>
</feature>
<feature type="binding site" evidence="1">
    <location>
        <begin position="57"/>
        <end position="59"/>
    </location>
    <ligand>
        <name>AMP</name>
        <dbReference type="ChEBI" id="CHEBI:456215"/>
    </ligand>
</feature>
<feature type="binding site" evidence="1">
    <location>
        <begin position="85"/>
        <end position="88"/>
    </location>
    <ligand>
        <name>AMP</name>
        <dbReference type="ChEBI" id="CHEBI:456215"/>
    </ligand>
</feature>
<feature type="binding site" evidence="1">
    <location>
        <position position="92"/>
    </location>
    <ligand>
        <name>AMP</name>
        <dbReference type="ChEBI" id="CHEBI:456215"/>
    </ligand>
</feature>
<feature type="binding site" evidence="1">
    <location>
        <position position="127"/>
    </location>
    <ligand>
        <name>ATP</name>
        <dbReference type="ChEBI" id="CHEBI:30616"/>
    </ligand>
</feature>
<feature type="binding site" evidence="1">
    <location>
        <position position="130"/>
    </location>
    <ligand>
        <name>Zn(2+)</name>
        <dbReference type="ChEBI" id="CHEBI:29105"/>
        <note>structural</note>
    </ligand>
</feature>
<feature type="binding site" evidence="1">
    <location>
        <position position="133"/>
    </location>
    <ligand>
        <name>Zn(2+)</name>
        <dbReference type="ChEBI" id="CHEBI:29105"/>
        <note>structural</note>
    </ligand>
</feature>
<feature type="binding site" evidence="1">
    <location>
        <begin position="136"/>
        <end position="137"/>
    </location>
    <ligand>
        <name>ATP</name>
        <dbReference type="ChEBI" id="CHEBI:30616"/>
    </ligand>
</feature>
<feature type="binding site" evidence="1">
    <location>
        <position position="150"/>
    </location>
    <ligand>
        <name>Zn(2+)</name>
        <dbReference type="ChEBI" id="CHEBI:29105"/>
        <note>structural</note>
    </ligand>
</feature>
<feature type="binding site" evidence="1">
    <location>
        <position position="153"/>
    </location>
    <ligand>
        <name>Zn(2+)</name>
        <dbReference type="ChEBI" id="CHEBI:29105"/>
        <note>structural</note>
    </ligand>
</feature>
<feature type="binding site" evidence="1">
    <location>
        <position position="160"/>
    </location>
    <ligand>
        <name>AMP</name>
        <dbReference type="ChEBI" id="CHEBI:456215"/>
    </ligand>
</feature>
<feature type="binding site" evidence="1">
    <location>
        <position position="171"/>
    </location>
    <ligand>
        <name>AMP</name>
        <dbReference type="ChEBI" id="CHEBI:456215"/>
    </ligand>
</feature>
<feature type="binding site" evidence="1">
    <location>
        <position position="199"/>
    </location>
    <ligand>
        <name>ATP</name>
        <dbReference type="ChEBI" id="CHEBI:30616"/>
    </ligand>
</feature>
<dbReference type="EC" id="2.7.4.3" evidence="1"/>
<dbReference type="EMBL" id="CP001634">
    <property type="protein sequence ID" value="ACR80562.1"/>
    <property type="molecule type" value="Genomic_DNA"/>
</dbReference>
<dbReference type="RefSeq" id="WP_015869205.1">
    <property type="nucleotide sequence ID" value="NC_012785.1"/>
</dbReference>
<dbReference type="SMR" id="C5CGI1"/>
<dbReference type="STRING" id="521045.Kole_1881"/>
<dbReference type="KEGG" id="kol:Kole_1881"/>
<dbReference type="eggNOG" id="COG0563">
    <property type="taxonomic scope" value="Bacteria"/>
</dbReference>
<dbReference type="HOGENOM" id="CLU_032354_1_2_0"/>
<dbReference type="OrthoDB" id="9805030at2"/>
<dbReference type="UniPathway" id="UPA00588">
    <property type="reaction ID" value="UER00649"/>
</dbReference>
<dbReference type="Proteomes" id="UP000002382">
    <property type="component" value="Chromosome"/>
</dbReference>
<dbReference type="GO" id="GO:0005737">
    <property type="term" value="C:cytoplasm"/>
    <property type="evidence" value="ECO:0007669"/>
    <property type="project" value="UniProtKB-SubCell"/>
</dbReference>
<dbReference type="GO" id="GO:0004017">
    <property type="term" value="F:adenylate kinase activity"/>
    <property type="evidence" value="ECO:0007669"/>
    <property type="project" value="UniProtKB-UniRule"/>
</dbReference>
<dbReference type="GO" id="GO:0005524">
    <property type="term" value="F:ATP binding"/>
    <property type="evidence" value="ECO:0007669"/>
    <property type="project" value="UniProtKB-UniRule"/>
</dbReference>
<dbReference type="GO" id="GO:0008270">
    <property type="term" value="F:zinc ion binding"/>
    <property type="evidence" value="ECO:0007669"/>
    <property type="project" value="UniProtKB-UniRule"/>
</dbReference>
<dbReference type="GO" id="GO:0044209">
    <property type="term" value="P:AMP salvage"/>
    <property type="evidence" value="ECO:0007669"/>
    <property type="project" value="UniProtKB-UniRule"/>
</dbReference>
<dbReference type="CDD" id="cd01428">
    <property type="entry name" value="ADK"/>
    <property type="match status" value="1"/>
</dbReference>
<dbReference type="FunFam" id="3.40.50.300:FF:000106">
    <property type="entry name" value="Adenylate kinase mitochondrial"/>
    <property type="match status" value="1"/>
</dbReference>
<dbReference type="Gene3D" id="3.40.50.300">
    <property type="entry name" value="P-loop containing nucleotide triphosphate hydrolases"/>
    <property type="match status" value="1"/>
</dbReference>
<dbReference type="HAMAP" id="MF_00235">
    <property type="entry name" value="Adenylate_kinase_Adk"/>
    <property type="match status" value="1"/>
</dbReference>
<dbReference type="InterPro" id="IPR006259">
    <property type="entry name" value="Adenyl_kin_sub"/>
</dbReference>
<dbReference type="InterPro" id="IPR000850">
    <property type="entry name" value="Adenylat/UMP-CMP_kin"/>
</dbReference>
<dbReference type="InterPro" id="IPR033690">
    <property type="entry name" value="Adenylat_kinase_CS"/>
</dbReference>
<dbReference type="InterPro" id="IPR007862">
    <property type="entry name" value="Adenylate_kinase_lid-dom"/>
</dbReference>
<dbReference type="InterPro" id="IPR027417">
    <property type="entry name" value="P-loop_NTPase"/>
</dbReference>
<dbReference type="NCBIfam" id="TIGR01351">
    <property type="entry name" value="adk"/>
    <property type="match status" value="1"/>
</dbReference>
<dbReference type="NCBIfam" id="NF001380">
    <property type="entry name" value="PRK00279.1-2"/>
    <property type="match status" value="1"/>
</dbReference>
<dbReference type="NCBIfam" id="NF001381">
    <property type="entry name" value="PRK00279.1-3"/>
    <property type="match status" value="1"/>
</dbReference>
<dbReference type="NCBIfam" id="NF001386">
    <property type="entry name" value="PRK00279.2-4"/>
    <property type="match status" value="1"/>
</dbReference>
<dbReference type="NCBIfam" id="NF011100">
    <property type="entry name" value="PRK14527.1"/>
    <property type="match status" value="1"/>
</dbReference>
<dbReference type="PANTHER" id="PTHR23359">
    <property type="entry name" value="NUCLEOTIDE KINASE"/>
    <property type="match status" value="1"/>
</dbReference>
<dbReference type="Pfam" id="PF00406">
    <property type="entry name" value="ADK"/>
    <property type="match status" value="1"/>
</dbReference>
<dbReference type="Pfam" id="PF05191">
    <property type="entry name" value="ADK_lid"/>
    <property type="match status" value="1"/>
</dbReference>
<dbReference type="PRINTS" id="PR00094">
    <property type="entry name" value="ADENYLTKNASE"/>
</dbReference>
<dbReference type="SUPFAM" id="SSF52540">
    <property type="entry name" value="P-loop containing nucleoside triphosphate hydrolases"/>
    <property type="match status" value="1"/>
</dbReference>
<dbReference type="PROSITE" id="PS00113">
    <property type="entry name" value="ADENYLATE_KINASE"/>
    <property type="match status" value="1"/>
</dbReference>
<keyword id="KW-0067">ATP-binding</keyword>
<keyword id="KW-0963">Cytoplasm</keyword>
<keyword id="KW-0418">Kinase</keyword>
<keyword id="KW-0479">Metal-binding</keyword>
<keyword id="KW-0545">Nucleotide biosynthesis</keyword>
<keyword id="KW-0547">Nucleotide-binding</keyword>
<keyword id="KW-1185">Reference proteome</keyword>
<keyword id="KW-0808">Transferase</keyword>
<keyword id="KW-0862">Zinc</keyword>
<sequence>MNIILLGPPGAGKGTQAKKIAMRYGIPHISTGDMLREAVAAGTELGKKVKEIIEKGLLVPDDLMVAIVEDRLKKPDSAKGFILDGFPRTVQQAESLSGILGNLGKELDAVILIDAPEEVVVERISSRRVCPSCGKVYNLLTIKPKNDMLCDDCNIGLIQREDDKPATVRERYRVYMEKTAPVINYYSEHGSLITIDGSLDIEAVTEEIFKNLENL</sequence>
<gene>
    <name evidence="1" type="primary">adk</name>
    <name type="ordered locus">Kole_1881</name>
</gene>
<organism>
    <name type="scientific">Kosmotoga olearia (strain ATCC BAA-1733 / DSM 21960 / TBF 19.5.1)</name>
    <dbReference type="NCBI Taxonomy" id="521045"/>
    <lineage>
        <taxon>Bacteria</taxon>
        <taxon>Thermotogati</taxon>
        <taxon>Thermotogota</taxon>
        <taxon>Thermotogae</taxon>
        <taxon>Kosmotogales</taxon>
        <taxon>Kosmotogaceae</taxon>
        <taxon>Kosmotoga</taxon>
    </lineage>
</organism>